<proteinExistence type="uncertain"/>
<sequence>MGDTFIRHIALLGFEKRFVPSQHYVRYMFLVKWQDLSEKVVYRRFTEIYEFHKTLKEMFPIEAGAINPENRIIPHLPAPKWFDGQRAAENHQGTLTEYCGTLMSLPTKISRCPHLLDFFKVRPDDLKLPTDNQTKKPETYLMPKDGKSTATDITGPIILQTYRAIANYEKTSGSEMALSTGDVVEVVEKSESGWWFCQMKAKRGWIPASFLEPLDSPDETEDPEPNYAGEPYVAIKAYTAVEGDEVSLLEGEAVEVIHKLLDGWWVIRKDDVTGYFPSMYLQKSGQDVSQAQRQIKRGAPPRRSSIRNVHSIHQRSRKRLSQDAYRRNSVRFLQQRRRQARPGPQSPGSPLEEERQTQRSKPQPAVPPRPSADLILNRCSESTKRKLASAV</sequence>
<gene>
    <name type="primary">NCF1B</name>
    <name type="synonym">SH3PXD1B</name>
</gene>
<name>NCF1B_HUMAN</name>
<dbReference type="EMBL" id="AC006995">
    <property type="status" value="NOT_ANNOTATED_CDS"/>
    <property type="molecule type" value="Genomic_DNA"/>
</dbReference>
<dbReference type="BMRB" id="A6NI72"/>
<dbReference type="SMR" id="A6NI72"/>
<dbReference type="FunCoup" id="A6NI72">
    <property type="interactions" value="7"/>
</dbReference>
<dbReference type="IntAct" id="A6NI72">
    <property type="interactions" value="1"/>
</dbReference>
<dbReference type="GlyGen" id="A6NI72">
    <property type="glycosylation" value="1 site, 1 O-linked glycan (1 site)"/>
</dbReference>
<dbReference type="iPTMnet" id="A6NI72"/>
<dbReference type="BioMuta" id="HGNC:32522"/>
<dbReference type="jPOST" id="A6NI72"/>
<dbReference type="MassIVE" id="A6NI72"/>
<dbReference type="PeptideAtlas" id="A6NI72"/>
<dbReference type="ProteomicsDB" id="1249"/>
<dbReference type="Pumba" id="A6NI72"/>
<dbReference type="AGR" id="HGNC:32522"/>
<dbReference type="GeneCards" id="NCF1B"/>
<dbReference type="HGNC" id="HGNC:32522">
    <property type="gene designation" value="NCF1B"/>
</dbReference>
<dbReference type="neXtProt" id="NX_A6NI72"/>
<dbReference type="InParanoid" id="A6NI72"/>
<dbReference type="PAN-GO" id="A6NI72">
    <property type="GO annotations" value="5 GO annotations based on evolutionary models"/>
</dbReference>
<dbReference type="PhylomeDB" id="A6NI72"/>
<dbReference type="PathwayCommons" id="A6NI72"/>
<dbReference type="SignaLink" id="A6NI72"/>
<dbReference type="Pharos" id="A6NI72">
    <property type="development level" value="Tdark"/>
</dbReference>
<dbReference type="Proteomes" id="UP000005640">
    <property type="component" value="Unplaced"/>
</dbReference>
<dbReference type="RNAct" id="A6NI72">
    <property type="molecule type" value="protein"/>
</dbReference>
<dbReference type="GO" id="GO:0005737">
    <property type="term" value="C:cytoplasm"/>
    <property type="evidence" value="ECO:0000318"/>
    <property type="project" value="GO_Central"/>
</dbReference>
<dbReference type="GO" id="GO:0043020">
    <property type="term" value="C:NADPH oxidase complex"/>
    <property type="evidence" value="ECO:0000318"/>
    <property type="project" value="GO_Central"/>
</dbReference>
<dbReference type="GO" id="GO:0035091">
    <property type="term" value="F:phosphatidylinositol binding"/>
    <property type="evidence" value="ECO:0007669"/>
    <property type="project" value="InterPro"/>
</dbReference>
<dbReference type="GO" id="GO:0016176">
    <property type="term" value="F:superoxide-generating NADPH oxidase activator activity"/>
    <property type="evidence" value="ECO:0000318"/>
    <property type="project" value="GO_Central"/>
</dbReference>
<dbReference type="GO" id="GO:0045730">
    <property type="term" value="P:respiratory burst"/>
    <property type="evidence" value="ECO:0000318"/>
    <property type="project" value="GO_Central"/>
</dbReference>
<dbReference type="GO" id="GO:0042554">
    <property type="term" value="P:superoxide anion generation"/>
    <property type="evidence" value="ECO:0000318"/>
    <property type="project" value="GO_Central"/>
</dbReference>
<dbReference type="CDD" id="cd06887">
    <property type="entry name" value="PX_p47phox"/>
    <property type="match status" value="1"/>
</dbReference>
<dbReference type="CDD" id="cd12021">
    <property type="entry name" value="SH3_p47phox_1"/>
    <property type="match status" value="1"/>
</dbReference>
<dbReference type="CDD" id="cd12022">
    <property type="entry name" value="SH3_p47phox_2"/>
    <property type="match status" value="1"/>
</dbReference>
<dbReference type="FunFam" id="2.30.30.40:FF:000121">
    <property type="entry name" value="Neutrophil cytosol factor 1"/>
    <property type="match status" value="1"/>
</dbReference>
<dbReference type="FunFam" id="3.30.1520.10:FF:000023">
    <property type="entry name" value="Neutrophil cytosol factor 1"/>
    <property type="match status" value="1"/>
</dbReference>
<dbReference type="FunFam" id="2.30.30.40:FF:000127">
    <property type="entry name" value="neutrophil cytosol factor 1"/>
    <property type="match status" value="1"/>
</dbReference>
<dbReference type="Gene3D" id="3.30.1520.10">
    <property type="entry name" value="Phox-like domain"/>
    <property type="match status" value="1"/>
</dbReference>
<dbReference type="Gene3D" id="2.30.30.40">
    <property type="entry name" value="SH3 Domains"/>
    <property type="match status" value="2"/>
</dbReference>
<dbReference type="InterPro" id="IPR051228">
    <property type="entry name" value="NADPH_Oxidase/PX-Domain"/>
</dbReference>
<dbReference type="InterPro" id="IPR015039">
    <property type="entry name" value="NCF1_C"/>
</dbReference>
<dbReference type="InterPro" id="IPR032136">
    <property type="entry name" value="NCF1_PBR/AIR"/>
</dbReference>
<dbReference type="InterPro" id="IPR035756">
    <property type="entry name" value="NCF1_SH3_1"/>
</dbReference>
<dbReference type="InterPro" id="IPR035757">
    <property type="entry name" value="NCF1_SH3_2"/>
</dbReference>
<dbReference type="InterPro" id="IPR001655">
    <property type="entry name" value="P47PHOX"/>
</dbReference>
<dbReference type="InterPro" id="IPR001683">
    <property type="entry name" value="PX_dom"/>
</dbReference>
<dbReference type="InterPro" id="IPR036871">
    <property type="entry name" value="PX_dom_sf"/>
</dbReference>
<dbReference type="InterPro" id="IPR034909">
    <property type="entry name" value="PX_p47phox"/>
</dbReference>
<dbReference type="InterPro" id="IPR036028">
    <property type="entry name" value="SH3-like_dom_sf"/>
</dbReference>
<dbReference type="InterPro" id="IPR001452">
    <property type="entry name" value="SH3_domain"/>
</dbReference>
<dbReference type="PANTHER" id="PTHR15706:SF6">
    <property type="entry name" value="NEUTROPHIL CYTOSOL FACTOR 1-RELATED"/>
    <property type="match status" value="1"/>
</dbReference>
<dbReference type="PANTHER" id="PTHR15706">
    <property type="entry name" value="SH3 MULTIPLE DOMAIN"/>
    <property type="match status" value="1"/>
</dbReference>
<dbReference type="Pfam" id="PF16621">
    <property type="entry name" value="NCF1_PBR_AIR"/>
    <property type="match status" value="1"/>
</dbReference>
<dbReference type="Pfam" id="PF08944">
    <property type="entry name" value="p47_phox_C"/>
    <property type="match status" value="1"/>
</dbReference>
<dbReference type="Pfam" id="PF00787">
    <property type="entry name" value="PX"/>
    <property type="match status" value="1"/>
</dbReference>
<dbReference type="Pfam" id="PF00018">
    <property type="entry name" value="SH3_1"/>
    <property type="match status" value="2"/>
</dbReference>
<dbReference type="PRINTS" id="PR00498">
    <property type="entry name" value="P47PHOX"/>
</dbReference>
<dbReference type="SMART" id="SM00312">
    <property type="entry name" value="PX"/>
    <property type="match status" value="1"/>
</dbReference>
<dbReference type="SMART" id="SM00326">
    <property type="entry name" value="SH3"/>
    <property type="match status" value="2"/>
</dbReference>
<dbReference type="SUPFAM" id="SSF64268">
    <property type="entry name" value="PX domain"/>
    <property type="match status" value="1"/>
</dbReference>
<dbReference type="SUPFAM" id="SSF50044">
    <property type="entry name" value="SH3-domain"/>
    <property type="match status" value="2"/>
</dbReference>
<dbReference type="PROSITE" id="PS50195">
    <property type="entry name" value="PX"/>
    <property type="match status" value="1"/>
</dbReference>
<dbReference type="PROSITE" id="PS50002">
    <property type="entry name" value="SH3"/>
    <property type="match status" value="2"/>
</dbReference>
<accession>A6NI72</accession>
<comment type="function">
    <text evidence="1">May be required for activation of the latent NADPH oxidase (necessary for superoxide production).</text>
</comment>
<comment type="subcellular location">
    <subcellularLocation>
        <location evidence="1">Cytoplasm</location>
    </subcellularLocation>
</comment>
<comment type="caution">
    <text evidence="6">Could be the product of a pseudogene.</text>
</comment>
<feature type="chain" id="PRO_0000349367" description="Putative neutrophil cytosol factor 1B">
    <location>
        <begin position="1"/>
        <end position="391"/>
    </location>
</feature>
<feature type="domain" description="PX" evidence="3">
    <location>
        <begin position="1"/>
        <end position="126"/>
    </location>
</feature>
<feature type="domain" description="SH3 1" evidence="4">
    <location>
        <begin position="157"/>
        <end position="216"/>
    </location>
</feature>
<feature type="domain" description="SH3 2" evidence="4">
    <location>
        <begin position="227"/>
        <end position="286"/>
    </location>
</feature>
<feature type="region of interest" description="Disordered" evidence="5">
    <location>
        <begin position="286"/>
        <end position="391"/>
    </location>
</feature>
<feature type="compositionally biased region" description="Basic residues" evidence="5">
    <location>
        <begin position="310"/>
        <end position="319"/>
    </location>
</feature>
<feature type="modified residue" description="Phosphoserine" evidence="2">
    <location>
        <position position="304"/>
    </location>
</feature>
<feature type="modified residue" description="Phosphoserine" evidence="2">
    <location>
        <position position="305"/>
    </location>
</feature>
<feature type="modified residue" description="Phosphoserine" evidence="2">
    <location>
        <position position="321"/>
    </location>
</feature>
<feature type="modified residue" description="Phosphoserine" evidence="2">
    <location>
        <position position="329"/>
    </location>
</feature>
<feature type="modified residue" description="Phosphoserine" evidence="2">
    <location>
        <position position="346"/>
    </location>
</feature>
<feature type="modified residue" description="Phosphoserine" evidence="2">
    <location>
        <position position="349"/>
    </location>
</feature>
<reference key="1">
    <citation type="journal article" date="2003" name="Nature">
        <title>The DNA sequence of human chromosome 7.</title>
        <authorList>
            <person name="Hillier L.W."/>
            <person name="Fulton R.S."/>
            <person name="Fulton L.A."/>
            <person name="Graves T.A."/>
            <person name="Pepin K.H."/>
            <person name="Wagner-McPherson C."/>
            <person name="Layman D."/>
            <person name="Maas J."/>
            <person name="Jaeger S."/>
            <person name="Walker R."/>
            <person name="Wylie K."/>
            <person name="Sekhon M."/>
            <person name="Becker M.C."/>
            <person name="O'Laughlin M.D."/>
            <person name="Schaller M.E."/>
            <person name="Fewell G.A."/>
            <person name="Delehaunty K.D."/>
            <person name="Miner T.L."/>
            <person name="Nash W.E."/>
            <person name="Cordes M."/>
            <person name="Du H."/>
            <person name="Sun H."/>
            <person name="Edwards J."/>
            <person name="Bradshaw-Cordum H."/>
            <person name="Ali J."/>
            <person name="Andrews S."/>
            <person name="Isak A."/>
            <person name="Vanbrunt A."/>
            <person name="Nguyen C."/>
            <person name="Du F."/>
            <person name="Lamar B."/>
            <person name="Courtney L."/>
            <person name="Kalicki J."/>
            <person name="Ozersky P."/>
            <person name="Bielicki L."/>
            <person name="Scott K."/>
            <person name="Holmes A."/>
            <person name="Harkins R."/>
            <person name="Harris A."/>
            <person name="Strong C.M."/>
            <person name="Hou S."/>
            <person name="Tomlinson C."/>
            <person name="Dauphin-Kohlberg S."/>
            <person name="Kozlowicz-Reilly A."/>
            <person name="Leonard S."/>
            <person name="Rohlfing T."/>
            <person name="Rock S.M."/>
            <person name="Tin-Wollam A.-M."/>
            <person name="Abbott A."/>
            <person name="Minx P."/>
            <person name="Maupin R."/>
            <person name="Strowmatt C."/>
            <person name="Latreille P."/>
            <person name="Miller N."/>
            <person name="Johnson D."/>
            <person name="Murray J."/>
            <person name="Woessner J.P."/>
            <person name="Wendl M.C."/>
            <person name="Yang S.-P."/>
            <person name="Schultz B.R."/>
            <person name="Wallis J.W."/>
            <person name="Spieth J."/>
            <person name="Bieri T.A."/>
            <person name="Nelson J.O."/>
            <person name="Berkowicz N."/>
            <person name="Wohldmann P.E."/>
            <person name="Cook L.L."/>
            <person name="Hickenbotham M.T."/>
            <person name="Eldred J."/>
            <person name="Williams D."/>
            <person name="Bedell J.A."/>
            <person name="Mardis E.R."/>
            <person name="Clifton S.W."/>
            <person name="Chissoe S.L."/>
            <person name="Marra M.A."/>
            <person name="Raymond C."/>
            <person name="Haugen E."/>
            <person name="Gillett W."/>
            <person name="Zhou Y."/>
            <person name="James R."/>
            <person name="Phelps K."/>
            <person name="Iadanoto S."/>
            <person name="Bubb K."/>
            <person name="Simms E."/>
            <person name="Levy R."/>
            <person name="Clendenning J."/>
            <person name="Kaul R."/>
            <person name="Kent W.J."/>
            <person name="Furey T.S."/>
            <person name="Baertsch R.A."/>
            <person name="Brent M.R."/>
            <person name="Keibler E."/>
            <person name="Flicek P."/>
            <person name="Bork P."/>
            <person name="Suyama M."/>
            <person name="Bailey J.A."/>
            <person name="Portnoy M.E."/>
            <person name="Torrents D."/>
            <person name="Chinwalla A.T."/>
            <person name="Gish W.R."/>
            <person name="Eddy S.R."/>
            <person name="McPherson J.D."/>
            <person name="Olson M.V."/>
            <person name="Eichler E.E."/>
            <person name="Green E.D."/>
            <person name="Waterston R.H."/>
            <person name="Wilson R.K."/>
        </authorList>
    </citation>
    <scope>NUCLEOTIDE SEQUENCE [LARGE SCALE GENOMIC DNA]</scope>
</reference>
<evidence type="ECO:0000250" key="1"/>
<evidence type="ECO:0000250" key="2">
    <source>
        <dbReference type="UniProtKB" id="P14598"/>
    </source>
</evidence>
<evidence type="ECO:0000255" key="3">
    <source>
        <dbReference type="PROSITE-ProRule" id="PRU00147"/>
    </source>
</evidence>
<evidence type="ECO:0000255" key="4">
    <source>
        <dbReference type="PROSITE-ProRule" id="PRU00192"/>
    </source>
</evidence>
<evidence type="ECO:0000256" key="5">
    <source>
        <dbReference type="SAM" id="MobiDB-lite"/>
    </source>
</evidence>
<evidence type="ECO:0000305" key="6"/>
<organism>
    <name type="scientific">Homo sapiens</name>
    <name type="common">Human</name>
    <dbReference type="NCBI Taxonomy" id="9606"/>
    <lineage>
        <taxon>Eukaryota</taxon>
        <taxon>Metazoa</taxon>
        <taxon>Chordata</taxon>
        <taxon>Craniata</taxon>
        <taxon>Vertebrata</taxon>
        <taxon>Euteleostomi</taxon>
        <taxon>Mammalia</taxon>
        <taxon>Eutheria</taxon>
        <taxon>Euarchontoglires</taxon>
        <taxon>Primates</taxon>
        <taxon>Haplorrhini</taxon>
        <taxon>Catarrhini</taxon>
        <taxon>Hominidae</taxon>
        <taxon>Homo</taxon>
    </lineage>
</organism>
<protein>
    <recommendedName>
        <fullName>Putative neutrophil cytosol factor 1B</fullName>
        <shortName>NCF-1B</shortName>
    </recommendedName>
    <alternativeName>
        <fullName>Putative SH3 and PX domain-containing protein 1B</fullName>
    </alternativeName>
</protein>
<keyword id="KW-0963">Cytoplasm</keyword>
<keyword id="KW-0597">Phosphoprotein</keyword>
<keyword id="KW-1267">Proteomics identification</keyword>
<keyword id="KW-1185">Reference proteome</keyword>
<keyword id="KW-0677">Repeat</keyword>
<keyword id="KW-0728">SH3 domain</keyword>